<protein>
    <recommendedName>
        <fullName evidence="1">7-cyano-7-deazaguanine synthase</fullName>
        <ecNumber evidence="1">6.3.4.20</ecNumber>
    </recommendedName>
    <alternativeName>
        <fullName evidence="1">7-cyano-7-carbaguanine synthase</fullName>
    </alternativeName>
    <alternativeName>
        <fullName evidence="1">PreQ(0) synthase</fullName>
    </alternativeName>
    <alternativeName>
        <fullName evidence="1">Queuosine biosynthesis protein QueC</fullName>
    </alternativeName>
</protein>
<accession>A8GPK3</accession>
<keyword id="KW-0067">ATP-binding</keyword>
<keyword id="KW-0436">Ligase</keyword>
<keyword id="KW-0479">Metal-binding</keyword>
<keyword id="KW-0547">Nucleotide-binding</keyword>
<keyword id="KW-0671">Queuosine biosynthesis</keyword>
<keyword id="KW-0862">Zinc</keyword>
<gene>
    <name evidence="1" type="primary">queC</name>
    <name type="ordered locus">A1C_05455</name>
</gene>
<evidence type="ECO:0000255" key="1">
    <source>
        <dbReference type="HAMAP-Rule" id="MF_01633"/>
    </source>
</evidence>
<sequence>MKKAVMLVSGGADSATVLAMAREIGYEIHSMSFNYGQRNNAELRKVKELIKEYNVKQHKIVDIDLRAFGGSALTDDNIDVPHYHDVNAVPEDVPVTYVPSRNTIFLSYALGYAEVIGAKDIFIGVHTSDSANYPDCRPEYIKSFEKMANLATSIGIQGQKITIHTPLIDMTKEQIIRTGLKLGVDYKNTISCYEPTEDDSSCGNCLACMIRLDAFKKNNIQDPIKYV</sequence>
<feature type="chain" id="PRO_1000069794" description="7-cyano-7-deazaguanine synthase">
    <location>
        <begin position="1"/>
        <end position="227"/>
    </location>
</feature>
<feature type="binding site" evidence="1">
    <location>
        <begin position="8"/>
        <end position="18"/>
    </location>
    <ligand>
        <name>ATP</name>
        <dbReference type="ChEBI" id="CHEBI:30616"/>
    </ligand>
</feature>
<feature type="binding site" evidence="1">
    <location>
        <position position="192"/>
    </location>
    <ligand>
        <name>Zn(2+)</name>
        <dbReference type="ChEBI" id="CHEBI:29105"/>
    </ligand>
</feature>
<feature type="binding site" evidence="1">
    <location>
        <position position="202"/>
    </location>
    <ligand>
        <name>Zn(2+)</name>
        <dbReference type="ChEBI" id="CHEBI:29105"/>
    </ligand>
</feature>
<feature type="binding site" evidence="1">
    <location>
        <position position="205"/>
    </location>
    <ligand>
        <name>Zn(2+)</name>
        <dbReference type="ChEBI" id="CHEBI:29105"/>
    </ligand>
</feature>
<feature type="binding site" evidence="1">
    <location>
        <position position="208"/>
    </location>
    <ligand>
        <name>Zn(2+)</name>
        <dbReference type="ChEBI" id="CHEBI:29105"/>
    </ligand>
</feature>
<reference key="1">
    <citation type="submission" date="2007-09" db="EMBL/GenBank/DDBJ databases">
        <title>Complete genome sequence of Rickettsia akari.</title>
        <authorList>
            <person name="Madan A."/>
            <person name="Fahey J."/>
            <person name="Helton E."/>
            <person name="Ketteman M."/>
            <person name="Madan A."/>
            <person name="Rodrigues S."/>
            <person name="Sanchez A."/>
            <person name="Whiting M."/>
            <person name="Dasch G."/>
            <person name="Eremeeva M."/>
        </authorList>
    </citation>
    <scope>NUCLEOTIDE SEQUENCE [LARGE SCALE GENOMIC DNA]</scope>
    <source>
        <strain>Hartford</strain>
    </source>
</reference>
<comment type="function">
    <text evidence="1">Catalyzes the ATP-dependent conversion of 7-carboxy-7-deazaguanine (CDG) to 7-cyano-7-deazaguanine (preQ(0)).</text>
</comment>
<comment type="catalytic activity">
    <reaction evidence="1">
        <text>7-carboxy-7-deazaguanine + NH4(+) + ATP = 7-cyano-7-deazaguanine + ADP + phosphate + H2O + H(+)</text>
        <dbReference type="Rhea" id="RHEA:27982"/>
        <dbReference type="ChEBI" id="CHEBI:15377"/>
        <dbReference type="ChEBI" id="CHEBI:15378"/>
        <dbReference type="ChEBI" id="CHEBI:28938"/>
        <dbReference type="ChEBI" id="CHEBI:30616"/>
        <dbReference type="ChEBI" id="CHEBI:43474"/>
        <dbReference type="ChEBI" id="CHEBI:45075"/>
        <dbReference type="ChEBI" id="CHEBI:61036"/>
        <dbReference type="ChEBI" id="CHEBI:456216"/>
        <dbReference type="EC" id="6.3.4.20"/>
    </reaction>
</comment>
<comment type="cofactor">
    <cofactor evidence="1">
        <name>Zn(2+)</name>
        <dbReference type="ChEBI" id="CHEBI:29105"/>
    </cofactor>
    <text evidence="1">Binds 1 zinc ion per subunit.</text>
</comment>
<comment type="pathway">
    <text evidence="1">Purine metabolism; 7-cyano-7-deazaguanine biosynthesis.</text>
</comment>
<comment type="similarity">
    <text evidence="1">Belongs to the QueC family.</text>
</comment>
<dbReference type="EC" id="6.3.4.20" evidence="1"/>
<dbReference type="EMBL" id="CP000847">
    <property type="protein sequence ID" value="ABV75328.1"/>
    <property type="molecule type" value="Genomic_DNA"/>
</dbReference>
<dbReference type="RefSeq" id="WP_012149958.1">
    <property type="nucleotide sequence ID" value="NC_009881.1"/>
</dbReference>
<dbReference type="SMR" id="A8GPK3"/>
<dbReference type="STRING" id="293614.A1C_05455"/>
<dbReference type="KEGG" id="rak:A1C_05455"/>
<dbReference type="eggNOG" id="COG0603">
    <property type="taxonomic scope" value="Bacteria"/>
</dbReference>
<dbReference type="HOGENOM" id="CLU_081854_1_0_5"/>
<dbReference type="UniPathway" id="UPA00391"/>
<dbReference type="Proteomes" id="UP000006830">
    <property type="component" value="Chromosome"/>
</dbReference>
<dbReference type="GO" id="GO:0005524">
    <property type="term" value="F:ATP binding"/>
    <property type="evidence" value="ECO:0007669"/>
    <property type="project" value="UniProtKB-UniRule"/>
</dbReference>
<dbReference type="GO" id="GO:0016879">
    <property type="term" value="F:ligase activity, forming carbon-nitrogen bonds"/>
    <property type="evidence" value="ECO:0007669"/>
    <property type="project" value="UniProtKB-UniRule"/>
</dbReference>
<dbReference type="GO" id="GO:0008270">
    <property type="term" value="F:zinc ion binding"/>
    <property type="evidence" value="ECO:0007669"/>
    <property type="project" value="UniProtKB-UniRule"/>
</dbReference>
<dbReference type="GO" id="GO:0008616">
    <property type="term" value="P:queuosine biosynthetic process"/>
    <property type="evidence" value="ECO:0007669"/>
    <property type="project" value="UniProtKB-UniRule"/>
</dbReference>
<dbReference type="CDD" id="cd01995">
    <property type="entry name" value="QueC-like"/>
    <property type="match status" value="1"/>
</dbReference>
<dbReference type="Gene3D" id="3.40.50.620">
    <property type="entry name" value="HUPs"/>
    <property type="match status" value="1"/>
</dbReference>
<dbReference type="HAMAP" id="MF_01633">
    <property type="entry name" value="QueC"/>
    <property type="match status" value="1"/>
</dbReference>
<dbReference type="InterPro" id="IPR018317">
    <property type="entry name" value="QueC"/>
</dbReference>
<dbReference type="InterPro" id="IPR014729">
    <property type="entry name" value="Rossmann-like_a/b/a_fold"/>
</dbReference>
<dbReference type="NCBIfam" id="TIGR00364">
    <property type="entry name" value="7-cyano-7-deazaguanine synthase QueC"/>
    <property type="match status" value="1"/>
</dbReference>
<dbReference type="PANTHER" id="PTHR42914">
    <property type="entry name" value="7-CYANO-7-DEAZAGUANINE SYNTHASE"/>
    <property type="match status" value="1"/>
</dbReference>
<dbReference type="PANTHER" id="PTHR42914:SF1">
    <property type="entry name" value="7-CYANO-7-DEAZAGUANINE SYNTHASE"/>
    <property type="match status" value="1"/>
</dbReference>
<dbReference type="Pfam" id="PF06508">
    <property type="entry name" value="QueC"/>
    <property type="match status" value="1"/>
</dbReference>
<dbReference type="PIRSF" id="PIRSF006293">
    <property type="entry name" value="ExsB"/>
    <property type="match status" value="1"/>
</dbReference>
<dbReference type="SUPFAM" id="SSF52402">
    <property type="entry name" value="Adenine nucleotide alpha hydrolases-like"/>
    <property type="match status" value="1"/>
</dbReference>
<proteinExistence type="inferred from homology"/>
<organism>
    <name type="scientific">Rickettsia akari (strain Hartford)</name>
    <dbReference type="NCBI Taxonomy" id="293614"/>
    <lineage>
        <taxon>Bacteria</taxon>
        <taxon>Pseudomonadati</taxon>
        <taxon>Pseudomonadota</taxon>
        <taxon>Alphaproteobacteria</taxon>
        <taxon>Rickettsiales</taxon>
        <taxon>Rickettsiaceae</taxon>
        <taxon>Rickettsieae</taxon>
        <taxon>Rickettsia</taxon>
        <taxon>spotted fever group</taxon>
    </lineage>
</organism>
<name>QUEC_RICAH</name>